<evidence type="ECO:0000250" key="1">
    <source>
        <dbReference type="UniProtKB" id="F1CMY8"/>
    </source>
</evidence>
<evidence type="ECO:0000250" key="2">
    <source>
        <dbReference type="UniProtKB" id="P71875"/>
    </source>
</evidence>
<evidence type="ECO:0000255" key="3">
    <source>
        <dbReference type="PROSITE-ProRule" id="PRU00628"/>
    </source>
</evidence>
<evidence type="ECO:0000269" key="4">
    <source>
    </source>
</evidence>
<evidence type="ECO:0000303" key="5">
    <source>
    </source>
</evidence>
<sequence length="383" mass="43668">MATETVGIREIDTGALPDRYARGWHCLGPVKNFSDGKPHSVNIFGTKLVVFADSKGELNVLDAYCRHMGGDLSKGTVKGDEVACPFHDWRWGGDGKCKLVPYAKRTPRLARTRSWHTDVRGGLLFVWHDHEGNPPQPEVRIPEIPEWHSGEWTDWKWNSMLIEGSNCREIIDNVTDMAHFFYIHFGLPTYFKNVFEGHIASQYLHNVGRPDVNDLGTAYGEAKLDSEASYFGPSFMINWLHNTYGEFKAESILINCHYPVTQDSFVLQWGVIVEKPKGLDDATTEKLADAFTEGVSKGFLQDVEIWKHKTRIDNPLLVEEDGAVYQMRRWYQQFYVDVADITPDMTDRFEMEVDTTAAVEKWNIEVQENLKAQAEAEKAEQSS</sequence>
<feature type="chain" id="PRO_0000404099" description="3-ketosteroid-9-alpha-monooxygenase, oxygenase component">
    <location>
        <begin position="1"/>
        <end position="383"/>
    </location>
</feature>
<feature type="domain" description="Rieske" evidence="3">
    <location>
        <begin position="24"/>
        <end position="126"/>
    </location>
</feature>
<feature type="binding site" evidence="3">
    <location>
        <position position="65"/>
    </location>
    <ligand>
        <name>[2Fe-2S] cluster</name>
        <dbReference type="ChEBI" id="CHEBI:190135"/>
    </ligand>
</feature>
<feature type="binding site" evidence="3">
    <location>
        <position position="67"/>
    </location>
    <ligand>
        <name>[2Fe-2S] cluster</name>
        <dbReference type="ChEBI" id="CHEBI:190135"/>
    </ligand>
</feature>
<feature type="binding site" evidence="3">
    <location>
        <position position="84"/>
    </location>
    <ligand>
        <name>[2Fe-2S] cluster</name>
        <dbReference type="ChEBI" id="CHEBI:190135"/>
    </ligand>
</feature>
<feature type="binding site" evidence="3">
    <location>
        <position position="87"/>
    </location>
    <ligand>
        <name>[2Fe-2S] cluster</name>
        <dbReference type="ChEBI" id="CHEBI:190135"/>
    </ligand>
</feature>
<feature type="binding site" evidence="1">
    <location>
        <position position="173"/>
    </location>
    <ligand>
        <name>Fe cation</name>
        <dbReference type="ChEBI" id="CHEBI:24875"/>
    </ligand>
</feature>
<feature type="binding site" evidence="2">
    <location>
        <position position="179"/>
    </location>
    <ligand>
        <name>Fe cation</name>
        <dbReference type="ChEBI" id="CHEBI:24875"/>
    </ligand>
</feature>
<feature type="binding site" evidence="2">
    <location>
        <position position="184"/>
    </location>
    <ligand>
        <name>Fe cation</name>
        <dbReference type="ChEBI" id="CHEBI:24875"/>
    </ligand>
</feature>
<feature type="binding site" evidence="2">
    <location>
        <position position="302"/>
    </location>
    <ligand>
        <name>Fe cation</name>
        <dbReference type="ChEBI" id="CHEBI:24875"/>
    </ligand>
</feature>
<accession>A0R4R3</accession>
<accession>I7GFV9</accession>
<reference key="1">
    <citation type="submission" date="2006-10" db="EMBL/GenBank/DDBJ databases">
        <authorList>
            <person name="Fleischmann R.D."/>
            <person name="Dodson R.J."/>
            <person name="Haft D.H."/>
            <person name="Merkel J.S."/>
            <person name="Nelson W.C."/>
            <person name="Fraser C.M."/>
        </authorList>
    </citation>
    <scope>NUCLEOTIDE SEQUENCE [LARGE SCALE GENOMIC DNA]</scope>
    <source>
        <strain>ATCC 700084 / mc(2)155</strain>
    </source>
</reference>
<reference key="2">
    <citation type="journal article" date="2007" name="Genome Biol.">
        <title>Interrupted coding sequences in Mycobacterium smegmatis: authentic mutations or sequencing errors?</title>
        <authorList>
            <person name="Deshayes C."/>
            <person name="Perrodou E."/>
            <person name="Gallien S."/>
            <person name="Euphrasie D."/>
            <person name="Schaeffer C."/>
            <person name="Van-Dorsselaer A."/>
            <person name="Poch O."/>
            <person name="Lecompte O."/>
            <person name="Reyrat J.-M."/>
        </authorList>
    </citation>
    <scope>NUCLEOTIDE SEQUENCE [LARGE SCALE GENOMIC DNA]</scope>
    <source>
        <strain>ATCC 700084 / mc(2)155</strain>
    </source>
</reference>
<reference key="3">
    <citation type="journal article" date="2009" name="Genome Res.">
        <title>Ortho-proteogenomics: multiple proteomes investigation through orthology and a new MS-based protocol.</title>
        <authorList>
            <person name="Gallien S."/>
            <person name="Perrodou E."/>
            <person name="Carapito C."/>
            <person name="Deshayes C."/>
            <person name="Reyrat J.-M."/>
            <person name="Van Dorsselaer A."/>
            <person name="Poch O."/>
            <person name="Schaeffer C."/>
            <person name="Lecompte O."/>
        </authorList>
    </citation>
    <scope>NUCLEOTIDE SEQUENCE [LARGE SCALE GENOMIC DNA]</scope>
    <source>
        <strain>ATCC 700084 / mc(2)155</strain>
    </source>
</reference>
<reference key="4">
    <citation type="journal article" date="2006" name="Appl. Environ. Microbiol.">
        <title>Generation of useful insertionally blocked sterol degradation pathway mutants of fast-growing mycobacteria and cloning, characterization, and expression of the terminal oxygenase of the 3-ketosteroid 9alpha-hydroxylase in Mycobacterium smegmatis mc(2)155.</title>
        <authorList>
            <person name="Andor A."/>
            <person name="Jekkel A."/>
            <person name="Hopwood D.A."/>
            <person name="Jeanplong F."/>
            <person name="Ilkoy E."/>
            <person name="Konya A."/>
            <person name="Kurucz I."/>
            <person name="Ambrus G."/>
        </authorList>
    </citation>
    <scope>FUNCTION AS A 3-KETOSTEROID-9-ALPHA-HYDROXYLASE</scope>
    <scope>DISRUPTION PHENOTYPE</scope>
</reference>
<gene>
    <name type="primary">kshA</name>
    <name type="ordered locus">MSMEG_5925</name>
    <name type="ordered locus">MSMEI_5766</name>
</gene>
<organism>
    <name type="scientific">Mycolicibacterium smegmatis (strain ATCC 700084 / mc(2)155)</name>
    <name type="common">Mycobacterium smegmatis</name>
    <dbReference type="NCBI Taxonomy" id="246196"/>
    <lineage>
        <taxon>Bacteria</taxon>
        <taxon>Bacillati</taxon>
        <taxon>Actinomycetota</taxon>
        <taxon>Actinomycetes</taxon>
        <taxon>Mycobacteriales</taxon>
        <taxon>Mycobacteriaceae</taxon>
        <taxon>Mycolicibacterium</taxon>
    </lineage>
</organism>
<comment type="function">
    <text evidence="4">Involved in the degradation of cholesterol. Catalyzes the introduction of a 9a-hydroxyl moiety into 1,4-androstadiene-3,17-dione (ADD) to yield the 9alpha-hydroxy-1,4-androstadiene-3,17-dione (9OHADD) intermediate which spontaneously form 3-hydroxy-9,10-seconandrost-1,3,5(10)-triene-9,17-dione (HSA) via the meta-cleavage of ring B with concomitant aromatization of ring A.</text>
</comment>
<comment type="catalytic activity">
    <reaction evidence="2">
        <text>androsta-1,4-diene-3,17-dione + 2 reduced [2Fe-2S]-[ferredoxin] + O2 + 2 H(+) = 9alpha-hydroxyandrosta-1,4-diene-3,17-dione + 2 oxidized [2Fe-2S]-[ferredoxin] + H2O</text>
        <dbReference type="Rhea" id="RHEA:32199"/>
        <dbReference type="Rhea" id="RHEA-COMP:10000"/>
        <dbReference type="Rhea" id="RHEA-COMP:10001"/>
        <dbReference type="ChEBI" id="CHEBI:15377"/>
        <dbReference type="ChEBI" id="CHEBI:15378"/>
        <dbReference type="ChEBI" id="CHEBI:15379"/>
        <dbReference type="ChEBI" id="CHEBI:33737"/>
        <dbReference type="ChEBI" id="CHEBI:33738"/>
        <dbReference type="ChEBI" id="CHEBI:40799"/>
        <dbReference type="ChEBI" id="CHEBI:63641"/>
        <dbReference type="EC" id="1.14.15.30"/>
    </reaction>
</comment>
<comment type="cofactor">
    <cofactor evidence="3">
        <name>[2Fe-2S] cluster</name>
        <dbReference type="ChEBI" id="CHEBI:190135"/>
    </cofactor>
    <text evidence="3">Binds 1 [2Fe-2S] cluster per subunit.</text>
</comment>
<comment type="cofactor">
    <cofactor evidence="2">
        <name>Fe cation</name>
        <dbReference type="ChEBI" id="CHEBI:24875"/>
    </cofactor>
    <text evidence="2">Binds 1 Fe cation.</text>
</comment>
<comment type="pathway">
    <text evidence="2">Lipid metabolism; steroid biosynthesis.</text>
</comment>
<comment type="subunit">
    <text evidence="2">Homotrimer. The two-component system 3-ketosteroid-9-alpha-monooxygenase is composed of an oxygenase component KshA and a reductase component KshB.</text>
</comment>
<comment type="induction">
    <text evidence="2">Induced by KstR.</text>
</comment>
<comment type="disruption phenotype">
    <text evidence="4">Cells lacking this gene form 4-androstene-3,17-dione and 1,4-androstadiene-3,17-dione from sitosterol.</text>
</comment>
<dbReference type="EC" id="1.14.15.30" evidence="2"/>
<dbReference type="EMBL" id="CP000480">
    <property type="protein sequence ID" value="ABK69965.1"/>
    <property type="molecule type" value="Genomic_DNA"/>
</dbReference>
<dbReference type="EMBL" id="CP001663">
    <property type="protein sequence ID" value="AFP42199.1"/>
    <property type="molecule type" value="Genomic_DNA"/>
</dbReference>
<dbReference type="RefSeq" id="WP_003897322.1">
    <property type="nucleotide sequence ID" value="NZ_SIJM01000017.1"/>
</dbReference>
<dbReference type="RefSeq" id="YP_890151.1">
    <property type="nucleotide sequence ID" value="NC_008596.1"/>
</dbReference>
<dbReference type="SMR" id="A0R4R3"/>
<dbReference type="STRING" id="246196.MSMEG_5925"/>
<dbReference type="PaxDb" id="246196-MSMEI_5766"/>
<dbReference type="KEGG" id="msb:LJ00_29300"/>
<dbReference type="KEGG" id="msg:MSMEI_5766"/>
<dbReference type="KEGG" id="msm:MSMEG_5925"/>
<dbReference type="PATRIC" id="fig|246196.19.peg.5765"/>
<dbReference type="eggNOG" id="COG4638">
    <property type="taxonomic scope" value="Bacteria"/>
</dbReference>
<dbReference type="OrthoDB" id="5243643at2"/>
<dbReference type="UniPathway" id="UPA00062"/>
<dbReference type="Proteomes" id="UP000000757">
    <property type="component" value="Chromosome"/>
</dbReference>
<dbReference type="Proteomes" id="UP000006158">
    <property type="component" value="Chromosome"/>
</dbReference>
<dbReference type="GO" id="GO:0051537">
    <property type="term" value="F:2 iron, 2 sulfur cluster binding"/>
    <property type="evidence" value="ECO:0007669"/>
    <property type="project" value="UniProtKB-KW"/>
</dbReference>
<dbReference type="GO" id="GO:0036200">
    <property type="term" value="F:3-ketosteroid 9-alpha-monooxygenase activity"/>
    <property type="evidence" value="ECO:0007669"/>
    <property type="project" value="UniProtKB-EC"/>
</dbReference>
<dbReference type="GO" id="GO:0046872">
    <property type="term" value="F:metal ion binding"/>
    <property type="evidence" value="ECO:0007669"/>
    <property type="project" value="UniProtKB-KW"/>
</dbReference>
<dbReference type="GO" id="GO:0050292">
    <property type="term" value="F:steroid 9-alpha-monooxygenase activity"/>
    <property type="evidence" value="ECO:0000315"/>
    <property type="project" value="UniProtKB"/>
</dbReference>
<dbReference type="GO" id="GO:0008203">
    <property type="term" value="P:cholesterol metabolic process"/>
    <property type="evidence" value="ECO:0007669"/>
    <property type="project" value="UniProtKB-KW"/>
</dbReference>
<dbReference type="GO" id="GO:0016042">
    <property type="term" value="P:lipid catabolic process"/>
    <property type="evidence" value="ECO:0007669"/>
    <property type="project" value="UniProtKB-KW"/>
</dbReference>
<dbReference type="GO" id="GO:0006694">
    <property type="term" value="P:steroid biosynthetic process"/>
    <property type="evidence" value="ECO:0000315"/>
    <property type="project" value="UniProtKB"/>
</dbReference>
<dbReference type="CDD" id="cd03531">
    <property type="entry name" value="Rieske_RO_Alpha_KSH"/>
    <property type="match status" value="1"/>
</dbReference>
<dbReference type="FunFam" id="2.102.10.10:FF:000012">
    <property type="entry name" value="3-ketosteroid-9-alpha-hydroxylase oxygenase subunit"/>
    <property type="match status" value="1"/>
</dbReference>
<dbReference type="FunFam" id="3.90.380.10:FF:000004">
    <property type="entry name" value="3-ketosteroid-9-alpha-hydroxylase oxygenase subunit"/>
    <property type="match status" value="1"/>
</dbReference>
<dbReference type="Gene3D" id="3.90.380.10">
    <property type="entry name" value="Naphthalene 1,2-dioxygenase Alpha Subunit, Chain A, domain 1"/>
    <property type="match status" value="1"/>
</dbReference>
<dbReference type="Gene3D" id="2.102.10.10">
    <property type="entry name" value="Rieske [2Fe-2S] iron-sulphur domain"/>
    <property type="match status" value="1"/>
</dbReference>
<dbReference type="InterPro" id="IPR050584">
    <property type="entry name" value="Cholesterol_7-desaturase"/>
</dbReference>
<dbReference type="InterPro" id="IPR045605">
    <property type="entry name" value="KshA-like_C"/>
</dbReference>
<dbReference type="InterPro" id="IPR017941">
    <property type="entry name" value="Rieske_2Fe-2S"/>
</dbReference>
<dbReference type="InterPro" id="IPR036922">
    <property type="entry name" value="Rieske_2Fe-2S_sf"/>
</dbReference>
<dbReference type="PANTHER" id="PTHR21266:SF60">
    <property type="entry name" value="3-KETOSTEROID-9-ALPHA-MONOOXYGENASE, OXYGENASE COMPONENT"/>
    <property type="match status" value="1"/>
</dbReference>
<dbReference type="PANTHER" id="PTHR21266">
    <property type="entry name" value="IRON-SULFUR DOMAIN CONTAINING PROTEIN"/>
    <property type="match status" value="1"/>
</dbReference>
<dbReference type="Pfam" id="PF19298">
    <property type="entry name" value="KshA_C"/>
    <property type="match status" value="1"/>
</dbReference>
<dbReference type="Pfam" id="PF00355">
    <property type="entry name" value="Rieske"/>
    <property type="match status" value="1"/>
</dbReference>
<dbReference type="SUPFAM" id="SSF55961">
    <property type="entry name" value="Bet v1-like"/>
    <property type="match status" value="1"/>
</dbReference>
<dbReference type="SUPFAM" id="SSF50022">
    <property type="entry name" value="ISP domain"/>
    <property type="match status" value="1"/>
</dbReference>
<dbReference type="PROSITE" id="PS51296">
    <property type="entry name" value="RIESKE"/>
    <property type="match status" value="1"/>
</dbReference>
<name>KSHA_MYCS2</name>
<protein>
    <recommendedName>
        <fullName evidence="5">3-ketosteroid-9-alpha-monooxygenase, oxygenase component</fullName>
    </recommendedName>
    <alternativeName>
        <fullName evidence="5">3-ketosteroid-9-alpha-hydroxylase, oxygenase component</fullName>
        <shortName evidence="5">KSH</shortName>
    </alternativeName>
    <alternativeName>
        <fullName evidence="2">Androsta-1,4-diene-3,17-dione 9-alpha-hydroxylase</fullName>
        <ecNumber evidence="2">1.14.15.30</ecNumber>
    </alternativeName>
    <alternativeName>
        <fullName evidence="2">Rieske-type oxygenase</fullName>
        <shortName evidence="2">RO</shortName>
    </alternativeName>
</protein>
<proteinExistence type="evidence at protein level"/>
<keyword id="KW-0001">2Fe-2S</keyword>
<keyword id="KW-0153">Cholesterol metabolism</keyword>
<keyword id="KW-0408">Iron</keyword>
<keyword id="KW-0411">Iron-sulfur</keyword>
<keyword id="KW-0442">Lipid degradation</keyword>
<keyword id="KW-0443">Lipid metabolism</keyword>
<keyword id="KW-0479">Metal-binding</keyword>
<keyword id="KW-0560">Oxidoreductase</keyword>
<keyword id="KW-1185">Reference proteome</keyword>
<keyword id="KW-0753">Steroid metabolism</keyword>
<keyword id="KW-1207">Sterol metabolism</keyword>